<accession>P43462</accession>
<gene>
    <name type="primary">thcR</name>
</gene>
<feature type="chain" id="PRO_0000194589" description="Probable thc operon regulatory protein">
    <location>
        <begin position="1"/>
        <end position="332"/>
    </location>
</feature>
<feature type="domain" description="HTH araC/xylS-type" evidence="1">
    <location>
        <begin position="227"/>
        <end position="328"/>
    </location>
</feature>
<feature type="DNA-binding region" description="H-T-H motif" evidence="1">
    <location>
        <begin position="244"/>
        <end position="265"/>
    </location>
</feature>
<feature type="DNA-binding region" description="H-T-H motif" evidence="1">
    <location>
        <begin position="295"/>
        <end position="318"/>
    </location>
</feature>
<proteinExistence type="predicted"/>
<evidence type="ECO:0000255" key="1">
    <source>
        <dbReference type="PROSITE-ProRule" id="PRU00593"/>
    </source>
</evidence>
<sequence length="332" mass="36919">MSEDPDRGNGTKTYLSDDIDEARAIGSDLYYPHEVRVLGDEHIFQMRMTAASFGPVTLGRLDYSTEVEIFTNELRDSYHVNIPMRGELVTGSGRARTVATPHRAAVYRCDQRTLLRGWASPYPTPVLALKIDRRALEDQLAARLGSEIVDPIVFGMDLDLDTVVGRQWLSLVEGLSHQLDSPEALALHPIVSTPMAECLMSGLLVAAEHDYRARLYEPKPALPGIVRLAVDYLEAHAQQPLTVAQVARNVGVSVRSLQVGFQNSLGTTPMRQLKIIRMQKARKDLLRADPASEGVTEIAQRWGFLHVGRFAGEYKQTFGVSPSEDLRTVPFR</sequence>
<name>THCR_RHOER</name>
<comment type="function">
    <text>Probably involved in the positive regulation of the thc operon for the degradation of the thiocarbamate herbicide EPTC.</text>
</comment>
<dbReference type="EMBL" id="U17130">
    <property type="protein sequence ID" value="AAC45748.1"/>
    <property type="molecule type" value="Genomic_DNA"/>
</dbReference>
<dbReference type="RefSeq" id="WP_222671510.1">
    <property type="nucleotide sequence ID" value="NZ_JABBPH010000001.1"/>
</dbReference>
<dbReference type="SMR" id="P43462"/>
<dbReference type="GO" id="GO:0003700">
    <property type="term" value="F:DNA-binding transcription factor activity"/>
    <property type="evidence" value="ECO:0007669"/>
    <property type="project" value="InterPro"/>
</dbReference>
<dbReference type="GO" id="GO:0043565">
    <property type="term" value="F:sequence-specific DNA binding"/>
    <property type="evidence" value="ECO:0007669"/>
    <property type="project" value="InterPro"/>
</dbReference>
<dbReference type="Gene3D" id="1.10.10.60">
    <property type="entry name" value="Homeodomain-like"/>
    <property type="match status" value="1"/>
</dbReference>
<dbReference type="InterPro" id="IPR035418">
    <property type="entry name" value="AraC-bd_2"/>
</dbReference>
<dbReference type="InterPro" id="IPR050204">
    <property type="entry name" value="AraC_XylS_family_regulators"/>
</dbReference>
<dbReference type="InterPro" id="IPR009057">
    <property type="entry name" value="Homeodomain-like_sf"/>
</dbReference>
<dbReference type="InterPro" id="IPR018060">
    <property type="entry name" value="HTH_AraC"/>
</dbReference>
<dbReference type="InterPro" id="IPR018062">
    <property type="entry name" value="HTH_AraC-typ_CS"/>
</dbReference>
<dbReference type="PANTHER" id="PTHR46796:SF12">
    <property type="entry name" value="HTH-TYPE DNA-BINDING TRANSCRIPTIONAL ACTIVATOR EUTR"/>
    <property type="match status" value="1"/>
</dbReference>
<dbReference type="PANTHER" id="PTHR46796">
    <property type="entry name" value="HTH-TYPE TRANSCRIPTIONAL ACTIVATOR RHAS-RELATED"/>
    <property type="match status" value="1"/>
</dbReference>
<dbReference type="Pfam" id="PF14525">
    <property type="entry name" value="AraC_binding_2"/>
    <property type="match status" value="1"/>
</dbReference>
<dbReference type="Pfam" id="PF12833">
    <property type="entry name" value="HTH_18"/>
    <property type="match status" value="1"/>
</dbReference>
<dbReference type="SMART" id="SM00342">
    <property type="entry name" value="HTH_ARAC"/>
    <property type="match status" value="1"/>
</dbReference>
<dbReference type="SUPFAM" id="SSF46689">
    <property type="entry name" value="Homeodomain-like"/>
    <property type="match status" value="2"/>
</dbReference>
<dbReference type="PROSITE" id="PS00041">
    <property type="entry name" value="HTH_ARAC_FAMILY_1"/>
    <property type="match status" value="1"/>
</dbReference>
<dbReference type="PROSITE" id="PS01124">
    <property type="entry name" value="HTH_ARAC_FAMILY_2"/>
    <property type="match status" value="1"/>
</dbReference>
<protein>
    <recommendedName>
        <fullName>Probable thc operon regulatory protein</fullName>
    </recommendedName>
</protein>
<keyword id="KW-0238">DNA-binding</keyword>
<keyword id="KW-0804">Transcription</keyword>
<keyword id="KW-0805">Transcription regulation</keyword>
<reference key="1">
    <citation type="journal article" date="1995" name="J. Bacteriol.">
        <title>Degradation of the thiocarbamate herbicide EPTC (S-ethyl dipropylcarbamothioate) and biosafening by Rhodococcus sp. strain NI86/21 involve an inducible cytochrome P-450 system and aldehyde dehydrogenase.</title>
        <authorList>
            <person name="Nagy I."/>
            <person name="Schoofs G."/>
            <person name="Compernolle F."/>
            <person name="Proost P."/>
            <person name="Vanderleyden J."/>
            <person name="de Mot R."/>
        </authorList>
    </citation>
    <scope>NUCLEOTIDE SEQUENCE [GENOMIC DNA]</scope>
    <source>
        <strain>NI86/21</strain>
    </source>
</reference>
<organism>
    <name type="scientific">Rhodococcus erythropolis</name>
    <name type="common">Arthrobacter picolinophilus</name>
    <dbReference type="NCBI Taxonomy" id="1833"/>
    <lineage>
        <taxon>Bacteria</taxon>
        <taxon>Bacillati</taxon>
        <taxon>Actinomycetota</taxon>
        <taxon>Actinomycetes</taxon>
        <taxon>Mycobacteriales</taxon>
        <taxon>Nocardiaceae</taxon>
        <taxon>Rhodococcus</taxon>
        <taxon>Rhodococcus erythropolis group</taxon>
    </lineage>
</organism>